<gene>
    <name type="ordered locus">RF_1306</name>
</gene>
<feature type="chain" id="PRO_0000281763" description="Putative ankyrin repeat protein RF_1306">
    <location>
        <begin position="1"/>
        <end position="380"/>
    </location>
</feature>
<feature type="repeat" description="ANK 1">
    <location>
        <begin position="48"/>
        <end position="76"/>
    </location>
</feature>
<feature type="repeat" description="ANK 2">
    <location>
        <begin position="80"/>
        <end position="109"/>
    </location>
</feature>
<feature type="repeat" description="ANK 3">
    <location>
        <begin position="112"/>
        <end position="143"/>
    </location>
</feature>
<feature type="repeat" description="ANK 4">
    <location>
        <begin position="170"/>
        <end position="199"/>
    </location>
</feature>
<feature type="repeat" description="ANK 5">
    <location>
        <begin position="203"/>
        <end position="233"/>
    </location>
</feature>
<feature type="repeat" description="ANK 6">
    <location>
        <begin position="239"/>
        <end position="268"/>
    </location>
</feature>
<feature type="repeat" description="ANK 7">
    <location>
        <begin position="270"/>
        <end position="299"/>
    </location>
</feature>
<feature type="repeat" description="ANK 8">
    <location>
        <begin position="303"/>
        <end position="333"/>
    </location>
</feature>
<feature type="repeat" description="ANK 9">
    <location>
        <begin position="337"/>
        <end position="366"/>
    </location>
</feature>
<dbReference type="EMBL" id="CP000053">
    <property type="protein sequence ID" value="AAY62157.1"/>
    <property type="molecule type" value="Genomic_DNA"/>
</dbReference>
<dbReference type="SMR" id="Q4UJY2"/>
<dbReference type="STRING" id="315456.RF_1306"/>
<dbReference type="KEGG" id="rfe:RF_1306"/>
<dbReference type="eggNOG" id="COG0666">
    <property type="taxonomic scope" value="Bacteria"/>
</dbReference>
<dbReference type="HOGENOM" id="CLU_061562_0_0_5"/>
<dbReference type="OrthoDB" id="7390289at2"/>
<dbReference type="Proteomes" id="UP000008548">
    <property type="component" value="Chromosome"/>
</dbReference>
<dbReference type="Gene3D" id="1.25.40.20">
    <property type="entry name" value="Ankyrin repeat-containing domain"/>
    <property type="match status" value="3"/>
</dbReference>
<dbReference type="InterPro" id="IPR002110">
    <property type="entry name" value="Ankyrin_rpt"/>
</dbReference>
<dbReference type="InterPro" id="IPR036770">
    <property type="entry name" value="Ankyrin_rpt-contain_sf"/>
</dbReference>
<dbReference type="InterPro" id="IPR051165">
    <property type="entry name" value="Multifunctional_ANK_Repeat"/>
</dbReference>
<dbReference type="PANTHER" id="PTHR24123">
    <property type="entry name" value="ANKYRIN REPEAT-CONTAINING"/>
    <property type="match status" value="1"/>
</dbReference>
<dbReference type="PANTHER" id="PTHR24123:SF33">
    <property type="entry name" value="PROTEIN HOS4"/>
    <property type="match status" value="1"/>
</dbReference>
<dbReference type="Pfam" id="PF12796">
    <property type="entry name" value="Ank_2"/>
    <property type="match status" value="2"/>
</dbReference>
<dbReference type="SMART" id="SM00248">
    <property type="entry name" value="ANK"/>
    <property type="match status" value="8"/>
</dbReference>
<dbReference type="SUPFAM" id="SSF48403">
    <property type="entry name" value="Ankyrin repeat"/>
    <property type="match status" value="1"/>
</dbReference>
<dbReference type="PROSITE" id="PS50297">
    <property type="entry name" value="ANK_REP_REGION"/>
    <property type="match status" value="1"/>
</dbReference>
<dbReference type="PROSITE" id="PS50088">
    <property type="entry name" value="ANK_REPEAT"/>
    <property type="match status" value="2"/>
</dbReference>
<keyword id="KW-0040">ANK repeat</keyword>
<keyword id="KW-0677">Repeat</keyword>
<name>Y1306_RICFE</name>
<proteinExistence type="predicted"/>
<protein>
    <recommendedName>
        <fullName>Putative ankyrin repeat protein RF_1306</fullName>
    </recommendedName>
</protein>
<organism>
    <name type="scientific">Rickettsia felis (strain ATCC VR-1525 / URRWXCal2)</name>
    <name type="common">Rickettsia azadi</name>
    <dbReference type="NCBI Taxonomy" id="315456"/>
    <lineage>
        <taxon>Bacteria</taxon>
        <taxon>Pseudomonadati</taxon>
        <taxon>Pseudomonadota</taxon>
        <taxon>Alphaproteobacteria</taxon>
        <taxon>Rickettsiales</taxon>
        <taxon>Rickettsiaceae</taxon>
        <taxon>Rickettsieae</taxon>
        <taxon>Rickettsia</taxon>
        <taxon>spotted fever group</taxon>
    </lineage>
</organism>
<accession>Q4UJY2</accession>
<reference key="1">
    <citation type="journal article" date="2005" name="PLoS Biol.">
        <title>The genome sequence of Rickettsia felis identifies the first putative conjugative plasmid in an obligate intracellular parasite.</title>
        <authorList>
            <person name="Ogata H."/>
            <person name="Renesto P."/>
            <person name="Audic S."/>
            <person name="Robert C."/>
            <person name="Blanc G."/>
            <person name="Fournier P.-E."/>
            <person name="Parinello H."/>
            <person name="Claverie J.-M."/>
            <person name="Raoult D."/>
        </authorList>
    </citation>
    <scope>NUCLEOTIDE SEQUENCE [LARGE SCALE GENOMIC DNA]</scope>
    <source>
        <strain>ATCC VR-1525 / URRWXCal2</strain>
    </source>
</reference>
<sequence length="380" mass="42903">MTTFNTVTRHPNYYTSYTKIAPKDYIISRLKALKAKIAKVNPMAIRDNKWSDLHIAVGAKELKLVKALCNEKNINATDAKCRTPLELAILGNDLETVKFLVQMGGKIAPNMYGWSAIHLAIKIDNVEMVEYLYENTEFQKYDKYGYTLHDWAEAMGRGEIVRFFHDKNHNNKTPLELAVESKNISSVKALIIKGAKFDIKSELGYKIFELAIDSEDMKLIEYLVNHTLVGKNTGQQTLLEKVAQIYDKNINLSKLVKVLIKDNAGFDKALGQKLLQKAIYADDLELVETLYSKGVDAQYKDQLGRSGLHHAIKANCGEELIQFLIEHTTDINYRDKSGLNPLGLAKSNNCTVATKLLLEAGAYESYMYDDVIKVLGEYGY</sequence>